<dbReference type="EC" id="4.1.99.17" evidence="1"/>
<dbReference type="EMBL" id="CP000560">
    <property type="protein sequence ID" value="ABS73271.1"/>
    <property type="molecule type" value="Genomic_DNA"/>
</dbReference>
<dbReference type="RefSeq" id="WP_012117130.1">
    <property type="nucleotide sequence ID" value="NC_009725.2"/>
</dbReference>
<dbReference type="SMR" id="A7Z2P5"/>
<dbReference type="GeneID" id="93080039"/>
<dbReference type="KEGG" id="bay:RBAM_009060"/>
<dbReference type="HOGENOM" id="CLU_013181_2_1_9"/>
<dbReference type="UniPathway" id="UPA00060"/>
<dbReference type="Proteomes" id="UP000001120">
    <property type="component" value="Chromosome"/>
</dbReference>
<dbReference type="GO" id="GO:0005829">
    <property type="term" value="C:cytosol"/>
    <property type="evidence" value="ECO:0007669"/>
    <property type="project" value="TreeGrafter"/>
</dbReference>
<dbReference type="GO" id="GO:0051539">
    <property type="term" value="F:4 iron, 4 sulfur cluster binding"/>
    <property type="evidence" value="ECO:0007669"/>
    <property type="project" value="UniProtKB-KW"/>
</dbReference>
<dbReference type="GO" id="GO:0016830">
    <property type="term" value="F:carbon-carbon lyase activity"/>
    <property type="evidence" value="ECO:0007669"/>
    <property type="project" value="InterPro"/>
</dbReference>
<dbReference type="GO" id="GO:0008270">
    <property type="term" value="F:zinc ion binding"/>
    <property type="evidence" value="ECO:0007669"/>
    <property type="project" value="UniProtKB-UniRule"/>
</dbReference>
<dbReference type="GO" id="GO:0009228">
    <property type="term" value="P:thiamine biosynthetic process"/>
    <property type="evidence" value="ECO:0007669"/>
    <property type="project" value="UniProtKB-KW"/>
</dbReference>
<dbReference type="GO" id="GO:0009229">
    <property type="term" value="P:thiamine diphosphate biosynthetic process"/>
    <property type="evidence" value="ECO:0007669"/>
    <property type="project" value="UniProtKB-UniRule"/>
</dbReference>
<dbReference type="FunFam" id="3.20.20.540:FF:000001">
    <property type="entry name" value="Phosphomethylpyrimidine synthase"/>
    <property type="match status" value="1"/>
</dbReference>
<dbReference type="Gene3D" id="6.10.250.620">
    <property type="match status" value="1"/>
</dbReference>
<dbReference type="Gene3D" id="3.20.20.540">
    <property type="entry name" value="Radical SAM ThiC family, central domain"/>
    <property type="match status" value="1"/>
</dbReference>
<dbReference type="HAMAP" id="MF_00089">
    <property type="entry name" value="ThiC"/>
    <property type="match status" value="1"/>
</dbReference>
<dbReference type="InterPro" id="IPR037509">
    <property type="entry name" value="ThiC"/>
</dbReference>
<dbReference type="InterPro" id="IPR025747">
    <property type="entry name" value="ThiC-associated_dom"/>
</dbReference>
<dbReference type="InterPro" id="IPR038521">
    <property type="entry name" value="ThiC/Bza_core_dom"/>
</dbReference>
<dbReference type="InterPro" id="IPR002817">
    <property type="entry name" value="ThiC/BzaA/B"/>
</dbReference>
<dbReference type="NCBIfam" id="NF006763">
    <property type="entry name" value="PRK09284.1"/>
    <property type="match status" value="1"/>
</dbReference>
<dbReference type="NCBIfam" id="NF009895">
    <property type="entry name" value="PRK13352.1"/>
    <property type="match status" value="1"/>
</dbReference>
<dbReference type="NCBIfam" id="TIGR00190">
    <property type="entry name" value="thiC"/>
    <property type="match status" value="1"/>
</dbReference>
<dbReference type="PANTHER" id="PTHR30557:SF1">
    <property type="entry name" value="PHOSPHOMETHYLPYRIMIDINE SYNTHASE, CHLOROPLASTIC"/>
    <property type="match status" value="1"/>
</dbReference>
<dbReference type="PANTHER" id="PTHR30557">
    <property type="entry name" value="THIAMINE BIOSYNTHESIS PROTEIN THIC"/>
    <property type="match status" value="1"/>
</dbReference>
<dbReference type="Pfam" id="PF13667">
    <property type="entry name" value="ThiC-associated"/>
    <property type="match status" value="1"/>
</dbReference>
<dbReference type="Pfam" id="PF01964">
    <property type="entry name" value="ThiC_Rad_SAM"/>
    <property type="match status" value="1"/>
</dbReference>
<dbReference type="SFLD" id="SFLDF00407">
    <property type="entry name" value="phosphomethylpyrimidine_syntha"/>
    <property type="match status" value="1"/>
</dbReference>
<dbReference type="SFLD" id="SFLDG01114">
    <property type="entry name" value="phosphomethylpyrimidine_syntha"/>
    <property type="match status" value="1"/>
</dbReference>
<dbReference type="SFLD" id="SFLDS00113">
    <property type="entry name" value="Radical_SAM_Phosphomethylpyrim"/>
    <property type="match status" value="1"/>
</dbReference>
<comment type="function">
    <text evidence="1">Catalyzes the synthesis of the hydroxymethylpyrimidine phosphate (HMP-P) moiety of thiamine from aminoimidazole ribotide (AIR) in a radical S-adenosyl-L-methionine (SAM)-dependent reaction.</text>
</comment>
<comment type="catalytic activity">
    <reaction evidence="1">
        <text>5-amino-1-(5-phospho-beta-D-ribosyl)imidazole + S-adenosyl-L-methionine = 4-amino-2-methyl-5-(phosphooxymethyl)pyrimidine + CO + 5'-deoxyadenosine + formate + L-methionine + 3 H(+)</text>
        <dbReference type="Rhea" id="RHEA:24840"/>
        <dbReference type="ChEBI" id="CHEBI:15378"/>
        <dbReference type="ChEBI" id="CHEBI:15740"/>
        <dbReference type="ChEBI" id="CHEBI:17245"/>
        <dbReference type="ChEBI" id="CHEBI:17319"/>
        <dbReference type="ChEBI" id="CHEBI:57844"/>
        <dbReference type="ChEBI" id="CHEBI:58354"/>
        <dbReference type="ChEBI" id="CHEBI:59789"/>
        <dbReference type="ChEBI" id="CHEBI:137981"/>
        <dbReference type="EC" id="4.1.99.17"/>
    </reaction>
</comment>
<comment type="cofactor">
    <cofactor evidence="1">
        <name>[4Fe-4S] cluster</name>
        <dbReference type="ChEBI" id="CHEBI:49883"/>
    </cofactor>
    <text evidence="1">Binds 1 [4Fe-4S] cluster per subunit. The cluster is coordinated with 3 cysteines and an exchangeable S-adenosyl-L-methionine.</text>
</comment>
<comment type="pathway">
    <text evidence="1">Cofactor biosynthesis; thiamine diphosphate biosynthesis.</text>
</comment>
<comment type="similarity">
    <text evidence="1">Belongs to the ThiC family.</text>
</comment>
<feature type="chain" id="PRO_1000004732" description="Phosphomethylpyrimidine synthase">
    <location>
        <begin position="1"/>
        <end position="590"/>
    </location>
</feature>
<feature type="binding site" evidence="1">
    <location>
        <position position="197"/>
    </location>
    <ligand>
        <name>substrate</name>
    </ligand>
</feature>
<feature type="binding site" evidence="1">
    <location>
        <position position="226"/>
    </location>
    <ligand>
        <name>substrate</name>
    </ligand>
</feature>
<feature type="binding site" evidence="1">
    <location>
        <position position="255"/>
    </location>
    <ligand>
        <name>substrate</name>
    </ligand>
</feature>
<feature type="binding site" evidence="1">
    <location>
        <position position="291"/>
    </location>
    <ligand>
        <name>substrate</name>
    </ligand>
</feature>
<feature type="binding site" evidence="1">
    <location>
        <begin position="311"/>
        <end position="313"/>
    </location>
    <ligand>
        <name>substrate</name>
    </ligand>
</feature>
<feature type="binding site" evidence="1">
    <location>
        <begin position="352"/>
        <end position="355"/>
    </location>
    <ligand>
        <name>substrate</name>
    </ligand>
</feature>
<feature type="binding site" evidence="1">
    <location>
        <position position="391"/>
    </location>
    <ligand>
        <name>substrate</name>
    </ligand>
</feature>
<feature type="binding site" evidence="1">
    <location>
        <position position="395"/>
    </location>
    <ligand>
        <name>Zn(2+)</name>
        <dbReference type="ChEBI" id="CHEBI:29105"/>
    </ligand>
</feature>
<feature type="binding site" evidence="1">
    <location>
        <position position="418"/>
    </location>
    <ligand>
        <name>substrate</name>
    </ligand>
</feature>
<feature type="binding site" evidence="1">
    <location>
        <position position="459"/>
    </location>
    <ligand>
        <name>Zn(2+)</name>
        <dbReference type="ChEBI" id="CHEBI:29105"/>
    </ligand>
</feature>
<feature type="binding site" evidence="1">
    <location>
        <position position="539"/>
    </location>
    <ligand>
        <name>[4Fe-4S] cluster</name>
        <dbReference type="ChEBI" id="CHEBI:49883"/>
        <note>4Fe-4S-S-AdoMet</note>
    </ligand>
</feature>
<feature type="binding site" evidence="1">
    <location>
        <position position="542"/>
    </location>
    <ligand>
        <name>[4Fe-4S] cluster</name>
        <dbReference type="ChEBI" id="CHEBI:49883"/>
        <note>4Fe-4S-S-AdoMet</note>
    </ligand>
</feature>
<feature type="binding site" evidence="1">
    <location>
        <position position="547"/>
    </location>
    <ligand>
        <name>[4Fe-4S] cluster</name>
        <dbReference type="ChEBI" id="CHEBI:49883"/>
        <note>4Fe-4S-S-AdoMet</note>
    </ligand>
</feature>
<evidence type="ECO:0000255" key="1">
    <source>
        <dbReference type="HAMAP-Rule" id="MF_00089"/>
    </source>
</evidence>
<organism>
    <name type="scientific">Bacillus velezensis (strain DSM 23117 / BGSC 10A6 / LMG 26770 / FZB42)</name>
    <name type="common">Bacillus amyloliquefaciens subsp. plantarum</name>
    <dbReference type="NCBI Taxonomy" id="326423"/>
    <lineage>
        <taxon>Bacteria</taxon>
        <taxon>Bacillati</taxon>
        <taxon>Bacillota</taxon>
        <taxon>Bacilli</taxon>
        <taxon>Bacillales</taxon>
        <taxon>Bacillaceae</taxon>
        <taxon>Bacillus</taxon>
        <taxon>Bacillus amyloliquefaciens group</taxon>
    </lineage>
</organism>
<name>THIC_BACVZ</name>
<protein>
    <recommendedName>
        <fullName evidence="1">Phosphomethylpyrimidine synthase</fullName>
        <ecNumber evidence="1">4.1.99.17</ecNumber>
    </recommendedName>
    <alternativeName>
        <fullName evidence="1">Hydroxymethylpyrimidine phosphate synthase</fullName>
        <shortName evidence="1">HMP-P synthase</shortName>
        <shortName evidence="1">HMP-phosphate synthase</shortName>
        <shortName evidence="1">HMPP synthase</shortName>
    </alternativeName>
    <alternativeName>
        <fullName evidence="1">Thiamine biosynthesis protein ThiC</fullName>
    </alternativeName>
</protein>
<proteinExistence type="inferred from homology"/>
<keyword id="KW-0004">4Fe-4S</keyword>
<keyword id="KW-0408">Iron</keyword>
<keyword id="KW-0411">Iron-sulfur</keyword>
<keyword id="KW-0456">Lyase</keyword>
<keyword id="KW-0479">Metal-binding</keyword>
<keyword id="KW-0949">S-adenosyl-L-methionine</keyword>
<keyword id="KW-0784">Thiamine biosynthesis</keyword>
<keyword id="KW-0862">Zinc</keyword>
<sequence>MQNQSVQQANISIMSSFSGSKKVYAEGSSPDIRVPMREISLSATTGAFGEEENAPVRVYDTSGPYTDPDVQIDIHEGLGALRTKWITGRGDVEEYNGRIVKPEDNGYKKEDHAAEYPGLQRKPLRAKPGKNVTQLHYARKGIITPEMEFIAIREHVSPEFVREEVASGRAIIPSNVNHPESEPMIIGRNFHVKINANIGNSAVTSSIEEEVEKMTWAIRWGADTMMDLSTGKDIHTTREWIIRNCPVPVGTVPIYQALEKVNGIAEDLTWDIYRDTLIEQAEQGVDYFTIHAGVLLRYVPLTAKRTTGIVSRGGAIMAQWCLAHHQESFLYTHFEEICEIMKTYDIAFSLGDGLRPGSIADANDEAQFAELETLGELTEIAWKHDVQVMIEGPGHVPMHKIKENMDKQLEICKEAPFYTLGPLTTDIAPGYDHITSAIGAAMIGWYGTAMLCYVTPKEHLGLPNRDDVREGVITYKIAAHAADLAKGHPGAQIRDDALSKARFEFRWRDQFHLSLDPERAMEYHDETLPAEGAKTAHFCSMCGPKFCSMRISQDIRDYAKENGLTEDEAVNEGLKEKAKEFAEKGSRLYQ</sequence>
<accession>A7Z2P5</accession>
<reference key="1">
    <citation type="journal article" date="2007" name="Nat. Biotechnol.">
        <title>Comparative analysis of the complete genome sequence of the plant growth-promoting bacterium Bacillus amyloliquefaciens FZB42.</title>
        <authorList>
            <person name="Chen X.H."/>
            <person name="Koumoutsi A."/>
            <person name="Scholz R."/>
            <person name="Eisenreich A."/>
            <person name="Schneider K."/>
            <person name="Heinemeyer I."/>
            <person name="Morgenstern B."/>
            <person name="Voss B."/>
            <person name="Hess W.R."/>
            <person name="Reva O."/>
            <person name="Junge H."/>
            <person name="Voigt B."/>
            <person name="Jungblut P.R."/>
            <person name="Vater J."/>
            <person name="Suessmuth R."/>
            <person name="Liesegang H."/>
            <person name="Strittmatter A."/>
            <person name="Gottschalk G."/>
            <person name="Borriss R."/>
        </authorList>
    </citation>
    <scope>NUCLEOTIDE SEQUENCE [LARGE SCALE GENOMIC DNA]</scope>
    <source>
        <strain>DSM 23117 / BGSC 10A6 / LMG 26770 / FZB42</strain>
    </source>
</reference>
<gene>
    <name evidence="1" type="primary">thiC</name>
    <name type="ordered locus">RBAM_009060</name>
</gene>